<name>CEP57_BOVIN</name>
<evidence type="ECO:0000250" key="1"/>
<evidence type="ECO:0000250" key="2">
    <source>
        <dbReference type="UniProtKB" id="Q86XR8"/>
    </source>
</evidence>
<evidence type="ECO:0000255" key="3"/>
<evidence type="ECO:0000256" key="4">
    <source>
        <dbReference type="SAM" id="MobiDB-lite"/>
    </source>
</evidence>
<evidence type="ECO:0000305" key="5"/>
<keyword id="KW-0175">Coiled coil</keyword>
<keyword id="KW-0963">Cytoplasm</keyword>
<keyword id="KW-0206">Cytoskeleton</keyword>
<keyword id="KW-0493">Microtubule</keyword>
<keyword id="KW-0539">Nucleus</keyword>
<keyword id="KW-0597">Phosphoprotein</keyword>
<keyword id="KW-1185">Reference proteome</keyword>
<sequence>MAAASVSETSASQFSNILAEPSKSNGSMVRHSSSPYVVYPPDKPFLNSDLRRSPNKPTFAYPESNSRAIFSALKNLQDKIRRLELERIQAEESVKTLSKETIEYKKVLDEQIPERENSKNEESKHNQELTSQLLAAENKCNLLEKQLEYMRNMIKHAEMERTSVLEKQVSLERERQHDQTHVQNQLEKLDLLEQEYNKLTTMQALAEKKMQELEAKLRQEEQERKRMQAKAAQLQTGLEVNRLIYEDKATSCVPNTKRIKKKKSKPPEKKGSRNYFAVQPHYRLCLGDMPFVAGKSTSPSHAVVANVQHVLHLMKQHSKVLCNDRVVSSIPLAKQVSSRTGKSKKSATPPSSSSVNEELSEVLQTLQDEFGQMSFDHQQLAKLIQESPTVELKDNLECELEALVGRMEAKANQITKVRKYQAQLEKQKLEKQKKELKATRKTLDEEGNSSSRSTTTGTTNKKDFAKPRPGEKSRKNLQLLKDMQSIQNSLQSNSLCWDY</sequence>
<reference key="1">
    <citation type="journal article" date="2003" name="Nat. Cell Biol.">
        <title>Translokin is an intracellular mediator of FGF-2 trafficking.</title>
        <authorList>
            <person name="Bossard C."/>
            <person name="Laurell H."/>
            <person name="Van den Berghe L."/>
            <person name="Meunier S."/>
            <person name="Zanibellato C."/>
            <person name="Prats H."/>
        </authorList>
    </citation>
    <scope>NUCLEOTIDE SEQUENCE [MRNA]</scope>
</reference>
<reference key="2">
    <citation type="submission" date="2005-11" db="EMBL/GenBank/DDBJ databases">
        <authorList>
            <consortium name="NIH - Mammalian Gene Collection (MGC) project"/>
        </authorList>
    </citation>
    <scope>NUCLEOTIDE SEQUENCE [LARGE SCALE MRNA] OF 1-492</scope>
    <source>
        <strain>Crossbred X Angus</strain>
        <tissue>Liver</tissue>
    </source>
</reference>
<comment type="function">
    <text evidence="1">Centrosomal protein which may be required for microtubule attachment to centrosomes. May act by forming ring-like structures around microtubules. Mediates nuclear translocation and mitogenic activity of the internalized growth factor FGF2 (By similarity).</text>
</comment>
<comment type="subunit">
    <text evidence="1">Homodimer and homooligomer. Interacts with FGF2 and RAP80. Does not interact with FGF1 or FGF2 isoform 24 kDa. Interacts with microtubules (By similarity).</text>
</comment>
<comment type="subcellular location">
    <subcellularLocation>
        <location evidence="1">Nucleus</location>
    </subcellularLocation>
    <subcellularLocation>
        <location evidence="1">Cytoplasm</location>
    </subcellularLocation>
    <subcellularLocation>
        <location evidence="1">Cytoplasm</location>
        <location evidence="1">Cytoskeleton</location>
        <location evidence="1">Microtubule organizing center</location>
        <location evidence="1">Centrosome</location>
    </subcellularLocation>
</comment>
<comment type="domain">
    <text evidence="1">The C-terminal region mediates the interaction with microtubules and is able to nucleate and bundles microtubules in vitro.</text>
</comment>
<comment type="domain">
    <text evidence="1">The centrosome localization domain (CLD) region mediates the localization to centrosomes and homooligomerization.</text>
</comment>
<comment type="similarity">
    <text evidence="5">Belongs to the translokin family.</text>
</comment>
<comment type="sequence caution" evidence="5">
    <conflict type="miscellaneous discrepancy">
        <sequence resource="EMBL-CDS" id="AAI09783"/>
    </conflict>
    <text>Contaminating sequence. Potential poly-A sequence.</text>
</comment>
<organism>
    <name type="scientific">Bos taurus</name>
    <name type="common">Bovine</name>
    <dbReference type="NCBI Taxonomy" id="9913"/>
    <lineage>
        <taxon>Eukaryota</taxon>
        <taxon>Metazoa</taxon>
        <taxon>Chordata</taxon>
        <taxon>Craniata</taxon>
        <taxon>Vertebrata</taxon>
        <taxon>Euteleostomi</taxon>
        <taxon>Mammalia</taxon>
        <taxon>Eutheria</taxon>
        <taxon>Laurasiatheria</taxon>
        <taxon>Artiodactyla</taxon>
        <taxon>Ruminantia</taxon>
        <taxon>Pecora</taxon>
        <taxon>Bovidae</taxon>
        <taxon>Bovinae</taxon>
        <taxon>Bos</taxon>
    </lineage>
</organism>
<proteinExistence type="evidence at transcript level"/>
<accession>Q865V0</accession>
<accession>Q32L39</accession>
<gene>
    <name type="primary">CEP57</name>
    <name type="synonym">TSP57</name>
</gene>
<feature type="chain" id="PRO_0000189531" description="Centrosomal protein of 57 kDa">
    <location>
        <begin position="1"/>
        <end position="499"/>
    </location>
</feature>
<feature type="region of interest" description="Disordered" evidence="4">
    <location>
        <begin position="1"/>
        <end position="58"/>
    </location>
</feature>
<feature type="region of interest" description="centrosome localization domain (CLD)" evidence="1">
    <location>
        <begin position="58"/>
        <end position="239"/>
    </location>
</feature>
<feature type="region of interest" description="Mediates interaction with microtubules" evidence="1">
    <location>
        <begin position="277"/>
        <end position="490"/>
    </location>
</feature>
<feature type="region of interest" description="Disordered" evidence="4">
    <location>
        <begin position="334"/>
        <end position="357"/>
    </location>
</feature>
<feature type="region of interest" description="Disordered" evidence="4">
    <location>
        <begin position="431"/>
        <end position="476"/>
    </location>
</feature>
<feature type="coiled-coil region" evidence="3">
    <location>
        <begin position="63"/>
        <end position="241"/>
    </location>
</feature>
<feature type="coiled-coil region" evidence="3">
    <location>
        <begin position="389"/>
        <end position="450"/>
    </location>
</feature>
<feature type="compositionally biased region" description="Polar residues" evidence="4">
    <location>
        <begin position="1"/>
        <end position="35"/>
    </location>
</feature>
<feature type="compositionally biased region" description="Low complexity" evidence="4">
    <location>
        <begin position="346"/>
        <end position="357"/>
    </location>
</feature>
<feature type="compositionally biased region" description="Basic and acidic residues" evidence="4">
    <location>
        <begin position="431"/>
        <end position="444"/>
    </location>
</feature>
<feature type="compositionally biased region" description="Low complexity" evidence="4">
    <location>
        <begin position="449"/>
        <end position="459"/>
    </location>
</feature>
<feature type="compositionally biased region" description="Basic and acidic residues" evidence="4">
    <location>
        <begin position="460"/>
        <end position="474"/>
    </location>
</feature>
<feature type="modified residue" description="Phosphoserine" evidence="2">
    <location>
        <position position="53"/>
    </location>
</feature>
<feature type="sequence conflict" description="In Ref. 2; AAI09783." evidence="5" ref="2">
    <original>P</original>
    <variation>Q</variation>
    <location>
        <position position="113"/>
    </location>
</feature>
<protein>
    <recommendedName>
        <fullName>Centrosomal protein of 57 kDa</fullName>
        <shortName>Cep57</shortName>
    </recommendedName>
    <alternativeName>
        <fullName>Testis-specific protein 57</fullName>
    </alternativeName>
    <alternativeName>
        <fullName>Translokin</fullName>
    </alternativeName>
</protein>
<dbReference type="EMBL" id="AY225094">
    <property type="protein sequence ID" value="AAO73940.1"/>
    <property type="molecule type" value="mRNA"/>
</dbReference>
<dbReference type="EMBL" id="BC109782">
    <property type="protein sequence ID" value="AAI09783.1"/>
    <property type="status" value="ALT_SEQ"/>
    <property type="molecule type" value="mRNA"/>
</dbReference>
<dbReference type="RefSeq" id="NP_852115.1">
    <property type="nucleotide sequence ID" value="NM_181450.1"/>
</dbReference>
<dbReference type="SMR" id="Q865V0"/>
<dbReference type="FunCoup" id="Q865V0">
    <property type="interactions" value="3488"/>
</dbReference>
<dbReference type="IntAct" id="Q865V0">
    <property type="interactions" value="2"/>
</dbReference>
<dbReference type="STRING" id="9913.ENSBTAP00000058237"/>
<dbReference type="PaxDb" id="9913-ENSBTAP00000046049"/>
<dbReference type="GeneID" id="353245"/>
<dbReference type="KEGG" id="bta:353245"/>
<dbReference type="CTD" id="9702"/>
<dbReference type="eggNOG" id="ENOG502QTZR">
    <property type="taxonomic scope" value="Eukaryota"/>
</dbReference>
<dbReference type="InParanoid" id="Q865V0"/>
<dbReference type="OrthoDB" id="76453at2759"/>
<dbReference type="Proteomes" id="UP000009136">
    <property type="component" value="Unplaced"/>
</dbReference>
<dbReference type="GO" id="GO:0005813">
    <property type="term" value="C:centrosome"/>
    <property type="evidence" value="ECO:0000250"/>
    <property type="project" value="UniProtKB"/>
</dbReference>
<dbReference type="GO" id="GO:0005737">
    <property type="term" value="C:cytoplasm"/>
    <property type="evidence" value="ECO:0007669"/>
    <property type="project" value="UniProtKB-SubCell"/>
</dbReference>
<dbReference type="GO" id="GO:0005874">
    <property type="term" value="C:microtubule"/>
    <property type="evidence" value="ECO:0000250"/>
    <property type="project" value="UniProtKB"/>
</dbReference>
<dbReference type="GO" id="GO:0005634">
    <property type="term" value="C:nucleus"/>
    <property type="evidence" value="ECO:0007669"/>
    <property type="project" value="UniProtKB-SubCell"/>
</dbReference>
<dbReference type="GO" id="GO:0017134">
    <property type="term" value="F:fibroblast growth factor binding"/>
    <property type="evidence" value="ECO:0000250"/>
    <property type="project" value="UniProtKB"/>
</dbReference>
<dbReference type="GO" id="GO:0043015">
    <property type="term" value="F:gamma-tubulin binding"/>
    <property type="evidence" value="ECO:0007669"/>
    <property type="project" value="InterPro"/>
</dbReference>
<dbReference type="GO" id="GO:0008017">
    <property type="term" value="F:microtubule binding"/>
    <property type="evidence" value="ECO:0000318"/>
    <property type="project" value="GO_Central"/>
</dbReference>
<dbReference type="GO" id="GO:0042803">
    <property type="term" value="F:protein homodimerization activity"/>
    <property type="evidence" value="ECO:0000250"/>
    <property type="project" value="UniProtKB"/>
</dbReference>
<dbReference type="GO" id="GO:0008543">
    <property type="term" value="P:fibroblast growth factor receptor signaling pathway"/>
    <property type="evidence" value="ECO:0000250"/>
    <property type="project" value="UniProtKB"/>
</dbReference>
<dbReference type="FunFam" id="1.20.58.90:FF:000003">
    <property type="entry name" value="Centrosomal protein of 57 kDa"/>
    <property type="match status" value="1"/>
</dbReference>
<dbReference type="Gene3D" id="1.20.58.90">
    <property type="match status" value="1"/>
</dbReference>
<dbReference type="InterPro" id="IPR051756">
    <property type="entry name" value="Centrosomal_MT-associated"/>
</dbReference>
<dbReference type="InterPro" id="IPR025913">
    <property type="entry name" value="Cep57_CLD"/>
</dbReference>
<dbReference type="InterPro" id="IPR024957">
    <property type="entry name" value="Cep57_MT-bd_dom"/>
</dbReference>
<dbReference type="PANTHER" id="PTHR19336:SF11">
    <property type="entry name" value="CENTROSOMAL PROTEIN OF 57 KDA"/>
    <property type="match status" value="1"/>
</dbReference>
<dbReference type="PANTHER" id="PTHR19336">
    <property type="entry name" value="UNCHARACTERIZED DUF1167"/>
    <property type="match status" value="1"/>
</dbReference>
<dbReference type="Pfam" id="PF14073">
    <property type="entry name" value="Cep57_CLD"/>
    <property type="match status" value="1"/>
</dbReference>
<dbReference type="Pfam" id="PF06657">
    <property type="entry name" value="Cep57_MT_bd"/>
    <property type="match status" value="1"/>
</dbReference>